<proteinExistence type="evidence at protein level"/>
<name>PIL13_ORYSJ</name>
<accession>Q10CH5</accession>
<feature type="chain" id="PRO_0000444469" description="Transcription factor PHYTOCHROME INTERACTING FACTOR-LIKE 13">
    <location>
        <begin position="1"/>
        <end position="410"/>
    </location>
</feature>
<feature type="domain" description="bHLH" evidence="1">
    <location>
        <begin position="220"/>
        <end position="269"/>
    </location>
</feature>
<feature type="region of interest" description="Disordered" evidence="2">
    <location>
        <begin position="82"/>
        <end position="110"/>
    </location>
</feature>
<feature type="region of interest" description="Disordered" evidence="2">
    <location>
        <begin position="137"/>
        <end position="225"/>
    </location>
</feature>
<feature type="region of interest" description="Basic motif" evidence="1">
    <location>
        <begin position="220"/>
        <end position="233"/>
    </location>
</feature>
<feature type="region of interest" description="Helix-loop-helix motif" evidence="1">
    <location>
        <begin position="234"/>
        <end position="269"/>
    </location>
</feature>
<feature type="region of interest" description="Disordered" evidence="2">
    <location>
        <begin position="357"/>
        <end position="410"/>
    </location>
</feature>
<feature type="compositionally biased region" description="Low complexity" evidence="2">
    <location>
        <begin position="82"/>
        <end position="92"/>
    </location>
</feature>
<feature type="compositionally biased region" description="Pro residues" evidence="2">
    <location>
        <begin position="93"/>
        <end position="104"/>
    </location>
</feature>
<feature type="compositionally biased region" description="Basic and acidic residues" evidence="2">
    <location>
        <begin position="187"/>
        <end position="197"/>
    </location>
</feature>
<feature type="compositionally biased region" description="Basic residues" evidence="2">
    <location>
        <begin position="209"/>
        <end position="219"/>
    </location>
</feature>
<feature type="compositionally biased region" description="Polar residues" evidence="2">
    <location>
        <begin position="380"/>
        <end position="410"/>
    </location>
</feature>
<gene>
    <name evidence="7" type="primary">PIL13</name>
    <name evidence="6" type="synonym">BHLH152</name>
    <name evidence="8" type="synonym">PIL1</name>
    <name evidence="11" type="ordered locus">Os03g0782500</name>
    <name evidence="10" type="ordered locus">LOC_Os03g56950</name>
</gene>
<protein>
    <recommendedName>
        <fullName evidence="7">Transcription factor PHYTOCHROME INTERACTING FACTOR-LIKE 13</fullName>
        <shortName evidence="7">OsPIL13</shortName>
        <shortName evidence="9">PIF-like protein 13</shortName>
    </recommendedName>
    <alternativeName>
        <fullName evidence="6">Basic helix-loop-helix protein 152</fullName>
        <shortName evidence="6">OsbHLH152</shortName>
    </alternativeName>
    <alternativeName>
        <fullName evidence="8">OsPIL1</fullName>
    </alternativeName>
</protein>
<dbReference type="EMBL" id="DP000009">
    <property type="protein sequence ID" value="ABF99196.1"/>
    <property type="molecule type" value="Genomic_DNA"/>
</dbReference>
<dbReference type="EMBL" id="DP000009">
    <property type="protein sequence ID" value="ABF99198.1"/>
    <property type="molecule type" value="Genomic_DNA"/>
</dbReference>
<dbReference type="EMBL" id="AP008209">
    <property type="protein sequence ID" value="BAF13379.1"/>
    <property type="molecule type" value="Genomic_DNA"/>
</dbReference>
<dbReference type="EMBL" id="AP014959">
    <property type="protein sequence ID" value="BAS86695.1"/>
    <property type="molecule type" value="Genomic_DNA"/>
</dbReference>
<dbReference type="EMBL" id="AK105637">
    <property type="protein sequence ID" value="BAG97322.1"/>
    <property type="molecule type" value="mRNA"/>
</dbReference>
<dbReference type="SMR" id="Q10CH5"/>
<dbReference type="FunCoup" id="Q10CH5">
    <property type="interactions" value="119"/>
</dbReference>
<dbReference type="IntAct" id="Q10CH5">
    <property type="interactions" value="1"/>
</dbReference>
<dbReference type="STRING" id="39947.Q10CH5"/>
<dbReference type="PaxDb" id="39947-Q10CH5"/>
<dbReference type="EnsemblPlants" id="Os03t0782500-01">
    <property type="protein sequence ID" value="Os03t0782500-01"/>
    <property type="gene ID" value="Os03g0782500"/>
</dbReference>
<dbReference type="Gramene" id="Os03t0782500-01">
    <property type="protein sequence ID" value="Os03t0782500-01"/>
    <property type="gene ID" value="Os03g0782500"/>
</dbReference>
<dbReference type="KEGG" id="dosa:Os03g0782500"/>
<dbReference type="eggNOG" id="ENOG502QTIX">
    <property type="taxonomic scope" value="Eukaryota"/>
</dbReference>
<dbReference type="HOGENOM" id="CLU_030314_3_1_1"/>
<dbReference type="InParanoid" id="Q10CH5"/>
<dbReference type="OMA" id="QLWHSVT"/>
<dbReference type="PlantReactome" id="R-OSA-5632095">
    <property type="pathway name" value="Brassinosteroid signaling"/>
</dbReference>
<dbReference type="PlantReactome" id="R-OSA-5679411">
    <property type="pathway name" value="Gibberellin signaling"/>
</dbReference>
<dbReference type="Proteomes" id="UP000000763">
    <property type="component" value="Chromosome 3"/>
</dbReference>
<dbReference type="Proteomes" id="UP000059680">
    <property type="component" value="Chromosome 3"/>
</dbReference>
<dbReference type="GO" id="GO:0005634">
    <property type="term" value="C:nucleus"/>
    <property type="evidence" value="ECO:0000314"/>
    <property type="project" value="UniProtKB"/>
</dbReference>
<dbReference type="GO" id="GO:0003677">
    <property type="term" value="F:DNA binding"/>
    <property type="evidence" value="ECO:0007669"/>
    <property type="project" value="UniProtKB-KW"/>
</dbReference>
<dbReference type="GO" id="GO:0003700">
    <property type="term" value="F:DNA-binding transcription factor activity"/>
    <property type="evidence" value="ECO:0007669"/>
    <property type="project" value="InterPro"/>
</dbReference>
<dbReference type="GO" id="GO:0046983">
    <property type="term" value="F:protein dimerization activity"/>
    <property type="evidence" value="ECO:0007669"/>
    <property type="project" value="InterPro"/>
</dbReference>
<dbReference type="GO" id="GO:0080006">
    <property type="term" value="P:internode patterning"/>
    <property type="evidence" value="ECO:0000315"/>
    <property type="project" value="UniProtKB"/>
</dbReference>
<dbReference type="GO" id="GO:0090229">
    <property type="term" value="P:negative regulation of red or far-red light signaling pathway"/>
    <property type="evidence" value="ECO:0000314"/>
    <property type="project" value="UniProtKB"/>
</dbReference>
<dbReference type="GO" id="GO:0045893">
    <property type="term" value="P:positive regulation of DNA-templated transcription"/>
    <property type="evidence" value="ECO:0000314"/>
    <property type="project" value="UniProtKB"/>
</dbReference>
<dbReference type="GO" id="GO:0006355">
    <property type="term" value="P:regulation of DNA-templated transcription"/>
    <property type="evidence" value="ECO:0000314"/>
    <property type="project" value="UniProtKB"/>
</dbReference>
<dbReference type="CDD" id="cd11445">
    <property type="entry name" value="bHLH_AtPIF_like"/>
    <property type="match status" value="1"/>
</dbReference>
<dbReference type="FunFam" id="4.10.280.10:FF:000004">
    <property type="entry name" value="Basic helix-loop-helix transcription factor"/>
    <property type="match status" value="1"/>
</dbReference>
<dbReference type="Gene3D" id="4.10.280.10">
    <property type="entry name" value="Helix-loop-helix DNA-binding domain"/>
    <property type="match status" value="1"/>
</dbReference>
<dbReference type="InterPro" id="IPR011598">
    <property type="entry name" value="bHLH_dom"/>
</dbReference>
<dbReference type="InterPro" id="IPR036638">
    <property type="entry name" value="HLH_DNA-bd_sf"/>
</dbReference>
<dbReference type="InterPro" id="IPR047265">
    <property type="entry name" value="PIF1-like_bHLH"/>
</dbReference>
<dbReference type="InterPro" id="IPR044273">
    <property type="entry name" value="PIF3-like"/>
</dbReference>
<dbReference type="PANTHER" id="PTHR46807:SF7">
    <property type="entry name" value="BHLH DOMAIN-CONTAINING PROTEIN"/>
    <property type="match status" value="1"/>
</dbReference>
<dbReference type="PANTHER" id="PTHR46807">
    <property type="entry name" value="TRANSCRIPTION FACTOR PIF3"/>
    <property type="match status" value="1"/>
</dbReference>
<dbReference type="Pfam" id="PF00010">
    <property type="entry name" value="HLH"/>
    <property type="match status" value="1"/>
</dbReference>
<dbReference type="SMART" id="SM00353">
    <property type="entry name" value="HLH"/>
    <property type="match status" value="1"/>
</dbReference>
<dbReference type="SUPFAM" id="SSF47459">
    <property type="entry name" value="HLH, helix-loop-helix DNA-binding domain"/>
    <property type="match status" value="1"/>
</dbReference>
<dbReference type="PROSITE" id="PS50888">
    <property type="entry name" value="BHLH"/>
    <property type="match status" value="1"/>
</dbReference>
<evidence type="ECO:0000255" key="1">
    <source>
        <dbReference type="PROSITE-ProRule" id="PRU00981"/>
    </source>
</evidence>
<evidence type="ECO:0000256" key="2">
    <source>
        <dbReference type="SAM" id="MobiDB-lite"/>
    </source>
</evidence>
<evidence type="ECO:0000269" key="3">
    <source>
    </source>
</evidence>
<evidence type="ECO:0000269" key="4">
    <source>
    </source>
</evidence>
<evidence type="ECO:0000269" key="5">
    <source>
    </source>
</evidence>
<evidence type="ECO:0000303" key="6">
    <source>
    </source>
</evidence>
<evidence type="ECO:0000303" key="7">
    <source>
    </source>
</evidence>
<evidence type="ECO:0000303" key="8">
    <source>
    </source>
</evidence>
<evidence type="ECO:0000305" key="9"/>
<evidence type="ECO:0000312" key="10">
    <source>
        <dbReference type="EMBL" id="ABF99196.1"/>
    </source>
</evidence>
<evidence type="ECO:0000312" key="11">
    <source>
        <dbReference type="EMBL" id="BAF13379.1"/>
    </source>
</evidence>
<comment type="function">
    <text evidence="3 5">Transcription factor that may act as negative regulator of phyB-dependent light signal transduction (PubMed:17485859). Transcription activator that acts as a positive regulator of internode elongation. May function via regulation of cell wall-related genes. May play a role in a drought-associated growth-restriction mechanism in response to drought stress (PubMed:22984180).</text>
</comment>
<comment type="subunit">
    <text evidence="3 4">Interacts with PRR1 (PubMed:17485859, PubMed:21549224). Interacts with LF (PubMed:21549224).</text>
</comment>
<comment type="subcellular location">
    <subcellularLocation>
        <location evidence="1 4 5">Nucleus</location>
    </subcellularLocation>
</comment>
<comment type="tissue specificity">
    <text evidence="5">Highly expressed in the node portions of the stem. Expressed in the leaves and the basal part of shoots.</text>
</comment>
<comment type="induction">
    <text evidence="3 5">Induced by light in dark-grown etiolated seedlings (PubMed:17485859). Circadian oscillation under 12 hour light / 12 hour dark cycle conditions, with peaks in the middle of the light period (PubMed:17485859, PubMed:22984180). Down-regulated by cold and drought stresses (PubMed:22984180).</text>
</comment>
<comment type="miscellaneous">
    <text evidence="5">Overexpression of PIL13 in transgenic plants promotes internode elongation. Expression of a chimeric repressor in transgenic plants results in short internode sections. Alteration of internode cell size causes the change in internode length.</text>
</comment>
<comment type="similarity">
    <text evidence="9">Belongs to the bHLH protein family.</text>
</comment>
<reference key="1">
    <citation type="journal article" date="2005" name="Genome Res.">
        <title>Sequence, annotation, and analysis of synteny between rice chromosome 3 and diverged grass species.</title>
        <authorList>
            <consortium name="The rice chromosome 3 sequencing consortium"/>
            <person name="Buell C.R."/>
            <person name="Yuan Q."/>
            <person name="Ouyang S."/>
            <person name="Liu J."/>
            <person name="Zhu W."/>
            <person name="Wang A."/>
            <person name="Maiti R."/>
            <person name="Haas B."/>
            <person name="Wortman J."/>
            <person name="Pertea M."/>
            <person name="Jones K.M."/>
            <person name="Kim M."/>
            <person name="Overton L."/>
            <person name="Tsitrin T."/>
            <person name="Fadrosh D."/>
            <person name="Bera J."/>
            <person name="Weaver B."/>
            <person name="Jin S."/>
            <person name="Johri S."/>
            <person name="Reardon M."/>
            <person name="Webb K."/>
            <person name="Hill J."/>
            <person name="Moffat K."/>
            <person name="Tallon L."/>
            <person name="Van Aken S."/>
            <person name="Lewis M."/>
            <person name="Utterback T."/>
            <person name="Feldblyum T."/>
            <person name="Zismann V."/>
            <person name="Iobst S."/>
            <person name="Hsiao J."/>
            <person name="de Vazeille A.R."/>
            <person name="Salzberg S.L."/>
            <person name="White O."/>
            <person name="Fraser C.M."/>
            <person name="Yu Y."/>
            <person name="Kim H."/>
            <person name="Rambo T."/>
            <person name="Currie J."/>
            <person name="Collura K."/>
            <person name="Kernodle-Thompson S."/>
            <person name="Wei F."/>
            <person name="Kudrna K."/>
            <person name="Ammiraju J.S.S."/>
            <person name="Luo M."/>
            <person name="Goicoechea J.L."/>
            <person name="Wing R.A."/>
            <person name="Henry D."/>
            <person name="Oates R."/>
            <person name="Palmer M."/>
            <person name="Pries G."/>
            <person name="Saski C."/>
            <person name="Simmons J."/>
            <person name="Soderlund C."/>
            <person name="Nelson W."/>
            <person name="de la Bastide M."/>
            <person name="Spiegel L."/>
            <person name="Nascimento L."/>
            <person name="Huang E."/>
            <person name="Preston R."/>
            <person name="Zutavern T."/>
            <person name="Palmer L."/>
            <person name="O'Shaughnessy A."/>
            <person name="Dike S."/>
            <person name="McCombie W.R."/>
            <person name="Minx P."/>
            <person name="Cordum H."/>
            <person name="Wilson R."/>
            <person name="Jin W."/>
            <person name="Lee H.R."/>
            <person name="Jiang J."/>
            <person name="Jackson S."/>
        </authorList>
    </citation>
    <scope>NUCLEOTIDE SEQUENCE [LARGE SCALE GENOMIC DNA]</scope>
    <source>
        <strain>cv. Nipponbare</strain>
    </source>
</reference>
<reference key="2">
    <citation type="journal article" date="2005" name="Nature">
        <title>The map-based sequence of the rice genome.</title>
        <authorList>
            <consortium name="International rice genome sequencing project (IRGSP)"/>
        </authorList>
    </citation>
    <scope>NUCLEOTIDE SEQUENCE [LARGE SCALE GENOMIC DNA]</scope>
    <source>
        <strain>cv. Nipponbare</strain>
    </source>
</reference>
<reference key="3">
    <citation type="journal article" date="2008" name="Nucleic Acids Res.">
        <title>The rice annotation project database (RAP-DB): 2008 update.</title>
        <authorList>
            <consortium name="The rice annotation project (RAP)"/>
        </authorList>
    </citation>
    <scope>GENOME REANNOTATION</scope>
    <source>
        <strain>cv. Nipponbare</strain>
    </source>
</reference>
<reference key="4">
    <citation type="journal article" date="2013" name="Rice">
        <title>Improvement of the Oryza sativa Nipponbare reference genome using next generation sequence and optical map data.</title>
        <authorList>
            <person name="Kawahara Y."/>
            <person name="de la Bastide M."/>
            <person name="Hamilton J.P."/>
            <person name="Kanamori H."/>
            <person name="McCombie W.R."/>
            <person name="Ouyang S."/>
            <person name="Schwartz D.C."/>
            <person name="Tanaka T."/>
            <person name="Wu J."/>
            <person name="Zhou S."/>
            <person name="Childs K.L."/>
            <person name="Davidson R.M."/>
            <person name="Lin H."/>
            <person name="Quesada-Ocampo L."/>
            <person name="Vaillancourt B."/>
            <person name="Sakai H."/>
            <person name="Lee S.S."/>
            <person name="Kim J."/>
            <person name="Numa H."/>
            <person name="Itoh T."/>
            <person name="Buell C.R."/>
            <person name="Matsumoto T."/>
        </authorList>
    </citation>
    <scope>GENOME REANNOTATION</scope>
    <source>
        <strain>cv. Nipponbare</strain>
    </source>
</reference>
<reference key="5">
    <citation type="journal article" date="2003" name="Science">
        <title>Collection, mapping, and annotation of over 28,000 cDNA clones from japonica rice.</title>
        <authorList>
            <consortium name="The rice full-length cDNA consortium"/>
        </authorList>
    </citation>
    <scope>NUCLEOTIDE SEQUENCE [LARGE SCALE MRNA]</scope>
    <source>
        <strain>cv. Nipponbare</strain>
    </source>
</reference>
<reference key="6">
    <citation type="journal article" date="2006" name="Plant Physiol.">
        <title>Genome-wide analysis of basic/helix-loop-helix transcription factor family in rice and Arabidopsis.</title>
        <authorList>
            <person name="Li X."/>
            <person name="Duan X."/>
            <person name="Jiang H."/>
            <person name="Sun Y."/>
            <person name="Tang Y."/>
            <person name="Yuan Z."/>
            <person name="Guo J."/>
            <person name="Liang W."/>
            <person name="Chen L."/>
            <person name="Yin J."/>
            <person name="Ma H."/>
            <person name="Wang J."/>
            <person name="Zhang D."/>
        </authorList>
    </citation>
    <scope>GENE FAMILY</scope>
    <scope>NOMENCLATURE</scope>
</reference>
<reference key="7">
    <citation type="journal article" date="2007" name="Biosci. Biotechnol. Biochem.">
        <title>Characterization of a set of phytochrome-interacting factor-like bHLH proteins in Oryza sativa.</title>
        <authorList>
            <person name="Nakamura Y."/>
            <person name="Kato T."/>
            <person name="Yamashino T."/>
            <person name="Murakami M."/>
            <person name="Mizuno T."/>
        </authorList>
    </citation>
    <scope>FUNCTION</scope>
    <scope>INTERACTION WITH PRR1</scope>
    <scope>INDUCTION</scope>
</reference>
<reference key="8">
    <citation type="journal article" date="2011" name="New Biotechnol.">
        <title>An atypical HLH protein OsLF in rice regulates flowering time and interacts with OsPIL13 and OsPIL15.</title>
        <authorList>
            <person name="Zhao X.L."/>
            <person name="Shi Z.Y."/>
            <person name="Peng L.T."/>
            <person name="Shen G.Z."/>
            <person name="Zhang J.L."/>
        </authorList>
    </citation>
    <scope>INTERACTION WITH LF AND PRR1</scope>
    <scope>SUBCELLULAR LOCATION</scope>
    <source>
        <strain>cv. Zhonghua 11</strain>
    </source>
</reference>
<reference key="9">
    <citation type="journal article" date="2012" name="Proc. Natl. Acad. Sci. U.S.A.">
        <title>Rice phytochrome-interacting factor-like protein OsPIL1 functions as a key regulator of internode elongation and induces a morphological response to drought stress.</title>
        <authorList>
            <person name="Todaka D."/>
            <person name="Nakashima K."/>
            <person name="Maruyama K."/>
            <person name="Kidokoro S."/>
            <person name="Osakabe Y."/>
            <person name="Ito Y."/>
            <person name="Matsukura S."/>
            <person name="Fujita Y."/>
            <person name="Yoshiwara K."/>
            <person name="Ohme-Takagi M."/>
            <person name="Kojima M."/>
            <person name="Sakakibara H."/>
            <person name="Shinozaki K."/>
            <person name="Yamaguchi-Shinozaki K."/>
        </authorList>
    </citation>
    <scope>FUNCTION</scope>
    <scope>SUBCELLULAR LOCATION</scope>
    <scope>INDUCTION</scope>
    <scope>TISSUE SPECIFICITY</scope>
</reference>
<organism>
    <name type="scientific">Oryza sativa subsp. japonica</name>
    <name type="common">Rice</name>
    <dbReference type="NCBI Taxonomy" id="39947"/>
    <lineage>
        <taxon>Eukaryota</taxon>
        <taxon>Viridiplantae</taxon>
        <taxon>Streptophyta</taxon>
        <taxon>Embryophyta</taxon>
        <taxon>Tracheophyta</taxon>
        <taxon>Spermatophyta</taxon>
        <taxon>Magnoliopsida</taxon>
        <taxon>Liliopsida</taxon>
        <taxon>Poales</taxon>
        <taxon>Poaceae</taxon>
        <taxon>BOP clade</taxon>
        <taxon>Oryzoideae</taxon>
        <taxon>Oryzeae</taxon>
        <taxon>Oryzinae</taxon>
        <taxon>Oryza</taxon>
        <taxon>Oryza sativa</taxon>
    </lineage>
</organism>
<keyword id="KW-0010">Activator</keyword>
<keyword id="KW-0238">DNA-binding</keyword>
<keyword id="KW-0539">Nucleus</keyword>
<keyword id="KW-1185">Reference proteome</keyword>
<keyword id="KW-0804">Transcription</keyword>
<keyword id="KW-0805">Transcription regulation</keyword>
<sequence length="410" mass="43855">MAICSTDNELVELLWHNGGVVAQPQAAQARVVSSSGRGQSASVLTGDDTETAAWFPDTLDDALEKDLYTQLWRSVTGDAFPAAAAAGPSSHHAPPPDLPPPAARPPMRSGIGSSWTGDICSAFCGSNHIPETAAQRCRDAGAALPPERPRRSSTHDGAGTSSSGGSGSNFGASGLPSESASAHKRKGREDSDSRSEDAECEATEETKSSSRRYGSKRRTRAAEVHNLSERRRRDRINEKMRALQELIPHCNKTDKASILDEAIEYLKSLQMQVQIMWMTTGMAPMMFPGAHQFMPPMAVGMNSACMPAAQGLSHMSRLPYMNHSMPNHIPLNSSPAMNPMNVANQMQNIQLREASNPFLHPDGWQTVPPQVSGPYASGPQVAQQNQIPKASASTVLPNSGAEQPPTSDGI</sequence>